<keyword id="KW-0665">Pyrimidine biosynthesis</keyword>
<keyword id="KW-1185">Reference proteome</keyword>
<keyword id="KW-0808">Transferase</keyword>
<gene>
    <name evidence="1" type="primary">pyrB</name>
    <name type="ordered locus">Wbm0385</name>
</gene>
<protein>
    <recommendedName>
        <fullName evidence="1">Aspartate carbamoyltransferase catalytic subunit</fullName>
        <ecNumber evidence="1">2.1.3.2</ecNumber>
    </recommendedName>
    <alternativeName>
        <fullName evidence="1">Aspartate transcarbamylase</fullName>
        <shortName evidence="1">ATCase</shortName>
    </alternativeName>
</protein>
<evidence type="ECO:0000255" key="1">
    <source>
        <dbReference type="HAMAP-Rule" id="MF_00001"/>
    </source>
</evidence>
<reference key="1">
    <citation type="journal article" date="2005" name="PLoS Biol.">
        <title>The Wolbachia genome of Brugia malayi: endosymbiont evolution within a human pathogenic nematode.</title>
        <authorList>
            <person name="Foster J."/>
            <person name="Ganatra M."/>
            <person name="Kamal I."/>
            <person name="Ware J."/>
            <person name="Makarova K."/>
            <person name="Ivanova N."/>
            <person name="Bhattacharyya A."/>
            <person name="Kapatral V."/>
            <person name="Kumar S."/>
            <person name="Posfai J."/>
            <person name="Vincze T."/>
            <person name="Ingram J."/>
            <person name="Moran L."/>
            <person name="Lapidus A."/>
            <person name="Omelchenko M."/>
            <person name="Kyrpides N."/>
            <person name="Ghedin E."/>
            <person name="Wang S."/>
            <person name="Goltsman E."/>
            <person name="Joukov V."/>
            <person name="Ostrovskaya O."/>
            <person name="Tsukerman K."/>
            <person name="Mazur M."/>
            <person name="Comb D."/>
            <person name="Koonin E."/>
            <person name="Slatko B."/>
        </authorList>
    </citation>
    <scope>NUCLEOTIDE SEQUENCE [LARGE SCALE GENOMIC DNA]</scope>
    <source>
        <strain>TRS</strain>
    </source>
</reference>
<organism>
    <name type="scientific">Wolbachia sp. subsp. Brugia malayi (strain TRS)</name>
    <dbReference type="NCBI Taxonomy" id="292805"/>
    <lineage>
        <taxon>Bacteria</taxon>
        <taxon>Pseudomonadati</taxon>
        <taxon>Pseudomonadota</taxon>
        <taxon>Alphaproteobacteria</taxon>
        <taxon>Rickettsiales</taxon>
        <taxon>Anaplasmataceae</taxon>
        <taxon>Wolbachieae</taxon>
        <taxon>Wolbachia</taxon>
    </lineage>
</organism>
<feature type="chain" id="PRO_0000301637" description="Aspartate carbamoyltransferase catalytic subunit">
    <location>
        <begin position="1"/>
        <end position="298"/>
    </location>
</feature>
<feature type="binding site" evidence="1">
    <location>
        <position position="54"/>
    </location>
    <ligand>
        <name>carbamoyl phosphate</name>
        <dbReference type="ChEBI" id="CHEBI:58228"/>
    </ligand>
</feature>
<feature type="binding site" evidence="1">
    <location>
        <position position="55"/>
    </location>
    <ligand>
        <name>carbamoyl phosphate</name>
        <dbReference type="ChEBI" id="CHEBI:58228"/>
    </ligand>
</feature>
<feature type="binding site" evidence="1">
    <location>
        <position position="82"/>
    </location>
    <ligand>
        <name>L-aspartate</name>
        <dbReference type="ChEBI" id="CHEBI:29991"/>
    </ligand>
</feature>
<feature type="binding site" evidence="1">
    <location>
        <position position="104"/>
    </location>
    <ligand>
        <name>carbamoyl phosphate</name>
        <dbReference type="ChEBI" id="CHEBI:58228"/>
    </ligand>
</feature>
<feature type="binding site" evidence="1">
    <location>
        <position position="132"/>
    </location>
    <ligand>
        <name>carbamoyl phosphate</name>
        <dbReference type="ChEBI" id="CHEBI:58228"/>
    </ligand>
</feature>
<feature type="binding site" evidence="1">
    <location>
        <position position="135"/>
    </location>
    <ligand>
        <name>carbamoyl phosphate</name>
        <dbReference type="ChEBI" id="CHEBI:58228"/>
    </ligand>
</feature>
<feature type="binding site" evidence="1">
    <location>
        <position position="165"/>
    </location>
    <ligand>
        <name>L-aspartate</name>
        <dbReference type="ChEBI" id="CHEBI:29991"/>
    </ligand>
</feature>
<feature type="binding site" evidence="1">
    <location>
        <position position="218"/>
    </location>
    <ligand>
        <name>L-aspartate</name>
        <dbReference type="ChEBI" id="CHEBI:29991"/>
    </ligand>
</feature>
<feature type="binding site" evidence="1">
    <location>
        <position position="260"/>
    </location>
    <ligand>
        <name>carbamoyl phosphate</name>
        <dbReference type="ChEBI" id="CHEBI:58228"/>
    </ligand>
</feature>
<feature type="binding site" evidence="1">
    <location>
        <position position="261"/>
    </location>
    <ligand>
        <name>carbamoyl phosphate</name>
        <dbReference type="ChEBI" id="CHEBI:58228"/>
    </ligand>
</feature>
<name>PYRB_WOLTR</name>
<proteinExistence type="inferred from homology"/>
<accession>Q5GSQ1</accession>
<comment type="function">
    <text evidence="1">Catalyzes the condensation of carbamoyl phosphate and aspartate to form carbamoyl aspartate and inorganic phosphate, the committed step in the de novo pyrimidine nucleotide biosynthesis pathway.</text>
</comment>
<comment type="catalytic activity">
    <reaction evidence="1">
        <text>carbamoyl phosphate + L-aspartate = N-carbamoyl-L-aspartate + phosphate + H(+)</text>
        <dbReference type="Rhea" id="RHEA:20013"/>
        <dbReference type="ChEBI" id="CHEBI:15378"/>
        <dbReference type="ChEBI" id="CHEBI:29991"/>
        <dbReference type="ChEBI" id="CHEBI:32814"/>
        <dbReference type="ChEBI" id="CHEBI:43474"/>
        <dbReference type="ChEBI" id="CHEBI:58228"/>
        <dbReference type="EC" id="2.1.3.2"/>
    </reaction>
</comment>
<comment type="pathway">
    <text evidence="1">Pyrimidine metabolism; UMP biosynthesis via de novo pathway; (S)-dihydroorotate from bicarbonate: step 2/3.</text>
</comment>
<comment type="subunit">
    <text evidence="1">Heterododecamer (2C3:3R2) of six catalytic PyrB chains organized as two trimers (C3), and six regulatory PyrI chains organized as three dimers (R2).</text>
</comment>
<comment type="similarity">
    <text evidence="1">Belongs to the aspartate/ornithine carbamoyltransferase superfamily. ATCase family.</text>
</comment>
<dbReference type="EC" id="2.1.3.2" evidence="1"/>
<dbReference type="EMBL" id="AE017321">
    <property type="protein sequence ID" value="AAW70973.1"/>
    <property type="molecule type" value="Genomic_DNA"/>
</dbReference>
<dbReference type="RefSeq" id="WP_011256583.1">
    <property type="nucleotide sequence ID" value="NC_006833.1"/>
</dbReference>
<dbReference type="SMR" id="Q5GSQ1"/>
<dbReference type="STRING" id="292805.Wbm0385"/>
<dbReference type="KEGG" id="wbm:Wbm0385"/>
<dbReference type="eggNOG" id="COG0540">
    <property type="taxonomic scope" value="Bacteria"/>
</dbReference>
<dbReference type="HOGENOM" id="CLU_043846_2_0_5"/>
<dbReference type="UniPathway" id="UPA00070">
    <property type="reaction ID" value="UER00116"/>
</dbReference>
<dbReference type="Proteomes" id="UP000000534">
    <property type="component" value="Chromosome"/>
</dbReference>
<dbReference type="GO" id="GO:0005829">
    <property type="term" value="C:cytosol"/>
    <property type="evidence" value="ECO:0007669"/>
    <property type="project" value="TreeGrafter"/>
</dbReference>
<dbReference type="GO" id="GO:0016597">
    <property type="term" value="F:amino acid binding"/>
    <property type="evidence" value="ECO:0007669"/>
    <property type="project" value="InterPro"/>
</dbReference>
<dbReference type="GO" id="GO:0004070">
    <property type="term" value="F:aspartate carbamoyltransferase activity"/>
    <property type="evidence" value="ECO:0007669"/>
    <property type="project" value="UniProtKB-UniRule"/>
</dbReference>
<dbReference type="GO" id="GO:0006207">
    <property type="term" value="P:'de novo' pyrimidine nucleobase biosynthetic process"/>
    <property type="evidence" value="ECO:0007669"/>
    <property type="project" value="InterPro"/>
</dbReference>
<dbReference type="GO" id="GO:0044205">
    <property type="term" value="P:'de novo' UMP biosynthetic process"/>
    <property type="evidence" value="ECO:0007669"/>
    <property type="project" value="UniProtKB-UniRule"/>
</dbReference>
<dbReference type="GO" id="GO:0006520">
    <property type="term" value="P:amino acid metabolic process"/>
    <property type="evidence" value="ECO:0007669"/>
    <property type="project" value="InterPro"/>
</dbReference>
<dbReference type="Gene3D" id="3.40.50.1370">
    <property type="entry name" value="Aspartate/ornithine carbamoyltransferase"/>
    <property type="match status" value="2"/>
</dbReference>
<dbReference type="HAMAP" id="MF_00001">
    <property type="entry name" value="Asp_carb_tr"/>
    <property type="match status" value="1"/>
</dbReference>
<dbReference type="InterPro" id="IPR006132">
    <property type="entry name" value="Asp/Orn_carbamoyltranf_P-bd"/>
</dbReference>
<dbReference type="InterPro" id="IPR006130">
    <property type="entry name" value="Asp/Orn_carbamoylTrfase"/>
</dbReference>
<dbReference type="InterPro" id="IPR036901">
    <property type="entry name" value="Asp/Orn_carbamoylTrfase_sf"/>
</dbReference>
<dbReference type="InterPro" id="IPR002082">
    <property type="entry name" value="Asp_carbamoyltransf"/>
</dbReference>
<dbReference type="InterPro" id="IPR006131">
    <property type="entry name" value="Asp_carbamoyltransf_Asp/Orn-bd"/>
</dbReference>
<dbReference type="NCBIfam" id="TIGR00670">
    <property type="entry name" value="asp_carb_tr"/>
    <property type="match status" value="1"/>
</dbReference>
<dbReference type="NCBIfam" id="NF002032">
    <property type="entry name" value="PRK00856.1"/>
    <property type="match status" value="1"/>
</dbReference>
<dbReference type="PANTHER" id="PTHR45753:SF6">
    <property type="entry name" value="ASPARTATE CARBAMOYLTRANSFERASE"/>
    <property type="match status" value="1"/>
</dbReference>
<dbReference type="PANTHER" id="PTHR45753">
    <property type="entry name" value="ORNITHINE CARBAMOYLTRANSFERASE, MITOCHONDRIAL"/>
    <property type="match status" value="1"/>
</dbReference>
<dbReference type="Pfam" id="PF00185">
    <property type="entry name" value="OTCace"/>
    <property type="match status" value="1"/>
</dbReference>
<dbReference type="Pfam" id="PF02729">
    <property type="entry name" value="OTCace_N"/>
    <property type="match status" value="1"/>
</dbReference>
<dbReference type="PRINTS" id="PR00100">
    <property type="entry name" value="AOTCASE"/>
</dbReference>
<dbReference type="PRINTS" id="PR00101">
    <property type="entry name" value="ATCASE"/>
</dbReference>
<dbReference type="SUPFAM" id="SSF53671">
    <property type="entry name" value="Aspartate/ornithine carbamoyltransferase"/>
    <property type="match status" value="1"/>
</dbReference>
<dbReference type="PROSITE" id="PS00097">
    <property type="entry name" value="CARBAMOYLTRANSFERASE"/>
    <property type="match status" value="1"/>
</dbReference>
<sequence length="298" mass="33192">MSNRKDLLSVLDFTVNDVGNIIELAGQYLENKAANGRILENKTVINLFFEDSTRTLTSFEMAAKSLGANVVTLPVKSSSINKGEDLTDMIKTLNAMNPDYIVVRQKSSGIVNMLAKHVSCLLINAGDGSSEHPTQALADYFVISSHKKQIKNLKIVICGDILHSRVARSNIRLLKMFGAKICLVAPPTLICKHFPEVDSIYYSLIEGIKDADVIMLLRLQKERMNSGCFIPSNREYFYLYGLDSQKLLCAKSNAIVMHPGPINRGIEISSDITDHIILQQVEFGLAIRKAVLHYYRPC</sequence>